<evidence type="ECO:0000250" key="1"/>
<evidence type="ECO:0000305" key="2"/>
<name>TRAY1_SALTI</name>
<gene>
    <name type="primary">traY</name>
</gene>
<organism>
    <name type="scientific">Salmonella typhi</name>
    <dbReference type="NCBI Taxonomy" id="90370"/>
    <lineage>
        <taxon>Bacteria</taxon>
        <taxon>Pseudomonadati</taxon>
        <taxon>Pseudomonadota</taxon>
        <taxon>Gammaproteobacteria</taxon>
        <taxon>Enterobacterales</taxon>
        <taxon>Enterobacteriaceae</taxon>
        <taxon>Salmonella</taxon>
    </lineage>
</organism>
<comment type="function">
    <text evidence="1">Conjugative DNA transfer (CDT) is the unidirectional transfer of ssDNA plasmid from a donor to a recipient cell. It is the central mechanism by which antibiotic resistance and virulence factors are propagated in bacterial populations. Part of the relaxosome, which facilitates a site- and strand-specific cut in the origin of transfer by TraI, at the nic site. Relaxosome formation requires binding of IHF and TraY to the oriT region, which then facilitates binding of TraI (By similarity).</text>
</comment>
<comment type="subunit">
    <text evidence="1">Part of the relaxosome, a complex composed of plasmid encoded TraI, TraM, TraY and host-encoded IHF bound to the F plasmid origin of transfer (oriT).</text>
</comment>
<comment type="subcellular location">
    <subcellularLocation>
        <location evidence="1">Cytoplasm</location>
    </subcellularLocation>
</comment>
<comment type="similarity">
    <text evidence="2">Belongs to the TraY family.</text>
</comment>
<keyword id="KW-0184">Conjugation</keyword>
<keyword id="KW-0963">Cytoplasm</keyword>
<keyword id="KW-0238">DNA-binding</keyword>
<keyword id="KW-0614">Plasmid</keyword>
<dbReference type="EMBL" id="M14733">
    <property type="protein sequence ID" value="AAA25604.1"/>
    <property type="molecule type" value="Genomic_DNA"/>
</dbReference>
<dbReference type="RefSeq" id="WP_181381904.1">
    <property type="nucleotide sequence ID" value="NZ_AF411480.1"/>
</dbReference>
<dbReference type="SMR" id="P12059"/>
<dbReference type="GO" id="GO:0005737">
    <property type="term" value="C:cytoplasm"/>
    <property type="evidence" value="ECO:0007669"/>
    <property type="project" value="UniProtKB-SubCell"/>
</dbReference>
<dbReference type="GO" id="GO:0003677">
    <property type="term" value="F:DNA binding"/>
    <property type="evidence" value="ECO:0007669"/>
    <property type="project" value="UniProtKB-KW"/>
</dbReference>
<dbReference type="InterPro" id="IPR008876">
    <property type="entry name" value="TraY"/>
</dbReference>
<dbReference type="Pfam" id="PF05509">
    <property type="entry name" value="TraY"/>
    <property type="match status" value="1"/>
</dbReference>
<reference key="1">
    <citation type="journal article" date="1986" name="J. Bacteriol.">
        <title>Nucleotide sequence of the tra YALE region from IncFV plasmid pED208.</title>
        <authorList>
            <person name="Finlay B.B."/>
            <person name="Frost L.S."/>
            <person name="Paranchych W."/>
        </authorList>
    </citation>
    <scope>NUCLEOTIDE SEQUENCE [GENOMIC DNA]</scope>
</reference>
<protein>
    <recommendedName>
        <fullName>Relaxosome protein TraY</fullName>
    </recommendedName>
</protein>
<sequence>MSGNIGANPIGKKVNISCSLDEAIDELLMESALKSGWSKKREAELRLEDHLRRFSLVPAEEQYIEKKVD</sequence>
<geneLocation type="plasmid">
    <name>IncFV pED208</name>
</geneLocation>
<feature type="chain" id="PRO_0000068486" description="Relaxosome protein TraY">
    <location>
        <begin position="1"/>
        <end position="69"/>
    </location>
</feature>
<accession>P12059</accession>
<proteinExistence type="inferred from homology"/>